<sequence>MAIREILVVPHPALKQVSQPVEKVDDELRALMDDMLETMYAAPGIGLAAIQIGVPKRVIVMDLAREGEEKQPRYFVNPEILWASDDTAPYEEGCLSVPEYYDEVERPARVKLRYLNYQGEQVEEDAEGLFAVCIQHEMDHLEGVLFIDHLSRLKREQAIKKVKKHAKAA</sequence>
<name>DEF_PHEZH</name>
<organism>
    <name type="scientific">Phenylobacterium zucineum (strain HLK1)</name>
    <dbReference type="NCBI Taxonomy" id="450851"/>
    <lineage>
        <taxon>Bacteria</taxon>
        <taxon>Pseudomonadati</taxon>
        <taxon>Pseudomonadota</taxon>
        <taxon>Alphaproteobacteria</taxon>
        <taxon>Caulobacterales</taxon>
        <taxon>Caulobacteraceae</taxon>
        <taxon>Phenylobacterium</taxon>
    </lineage>
</organism>
<reference key="1">
    <citation type="journal article" date="2008" name="BMC Genomics">
        <title>Complete genome of Phenylobacterium zucineum - a novel facultative intracellular bacterium isolated from human erythroleukemia cell line K562.</title>
        <authorList>
            <person name="Luo Y."/>
            <person name="Xu X."/>
            <person name="Ding Z."/>
            <person name="Liu Z."/>
            <person name="Zhang B."/>
            <person name="Yan Z."/>
            <person name="Sun J."/>
            <person name="Hu S."/>
            <person name="Hu X."/>
        </authorList>
    </citation>
    <scope>NUCLEOTIDE SEQUENCE [LARGE SCALE GENOMIC DNA]</scope>
    <source>
        <strain>HLK1</strain>
    </source>
</reference>
<evidence type="ECO:0000255" key="1">
    <source>
        <dbReference type="HAMAP-Rule" id="MF_00163"/>
    </source>
</evidence>
<proteinExistence type="inferred from homology"/>
<accession>B4RDT8</accession>
<feature type="chain" id="PRO_1000097331" description="Peptide deformylase">
    <location>
        <begin position="1"/>
        <end position="169"/>
    </location>
</feature>
<feature type="active site" evidence="1">
    <location>
        <position position="137"/>
    </location>
</feature>
<feature type="binding site" evidence="1">
    <location>
        <position position="94"/>
    </location>
    <ligand>
        <name>Fe cation</name>
        <dbReference type="ChEBI" id="CHEBI:24875"/>
    </ligand>
</feature>
<feature type="binding site" evidence="1">
    <location>
        <position position="136"/>
    </location>
    <ligand>
        <name>Fe cation</name>
        <dbReference type="ChEBI" id="CHEBI:24875"/>
    </ligand>
</feature>
<feature type="binding site" evidence="1">
    <location>
        <position position="140"/>
    </location>
    <ligand>
        <name>Fe cation</name>
        <dbReference type="ChEBI" id="CHEBI:24875"/>
    </ligand>
</feature>
<keyword id="KW-0378">Hydrolase</keyword>
<keyword id="KW-0408">Iron</keyword>
<keyword id="KW-0479">Metal-binding</keyword>
<keyword id="KW-0648">Protein biosynthesis</keyword>
<keyword id="KW-1185">Reference proteome</keyword>
<comment type="function">
    <text evidence="1">Removes the formyl group from the N-terminal Met of newly synthesized proteins. Requires at least a dipeptide for an efficient rate of reaction. N-terminal L-methionine is a prerequisite for activity but the enzyme has broad specificity at other positions.</text>
</comment>
<comment type="catalytic activity">
    <reaction evidence="1">
        <text>N-terminal N-formyl-L-methionyl-[peptide] + H2O = N-terminal L-methionyl-[peptide] + formate</text>
        <dbReference type="Rhea" id="RHEA:24420"/>
        <dbReference type="Rhea" id="RHEA-COMP:10639"/>
        <dbReference type="Rhea" id="RHEA-COMP:10640"/>
        <dbReference type="ChEBI" id="CHEBI:15377"/>
        <dbReference type="ChEBI" id="CHEBI:15740"/>
        <dbReference type="ChEBI" id="CHEBI:49298"/>
        <dbReference type="ChEBI" id="CHEBI:64731"/>
        <dbReference type="EC" id="3.5.1.88"/>
    </reaction>
</comment>
<comment type="cofactor">
    <cofactor evidence="1">
        <name>Fe(2+)</name>
        <dbReference type="ChEBI" id="CHEBI:29033"/>
    </cofactor>
    <text evidence="1">Binds 1 Fe(2+) ion.</text>
</comment>
<comment type="similarity">
    <text evidence="1">Belongs to the polypeptide deformylase family.</text>
</comment>
<protein>
    <recommendedName>
        <fullName evidence="1">Peptide deformylase</fullName>
        <shortName evidence="1">PDF</shortName>
        <ecNumber evidence="1">3.5.1.88</ecNumber>
    </recommendedName>
    <alternativeName>
        <fullName evidence="1">Polypeptide deformylase</fullName>
    </alternativeName>
</protein>
<dbReference type="EC" id="3.5.1.88" evidence="1"/>
<dbReference type="EMBL" id="CP000747">
    <property type="protein sequence ID" value="ACG76787.1"/>
    <property type="molecule type" value="Genomic_DNA"/>
</dbReference>
<dbReference type="RefSeq" id="WP_012520935.1">
    <property type="nucleotide sequence ID" value="NC_011144.1"/>
</dbReference>
<dbReference type="SMR" id="B4RDT8"/>
<dbReference type="STRING" id="450851.PHZ_c0373"/>
<dbReference type="KEGG" id="pzu:PHZ_c0373"/>
<dbReference type="eggNOG" id="COG0242">
    <property type="taxonomic scope" value="Bacteria"/>
</dbReference>
<dbReference type="HOGENOM" id="CLU_061901_2_0_5"/>
<dbReference type="OrthoDB" id="9804313at2"/>
<dbReference type="Proteomes" id="UP000001868">
    <property type="component" value="Chromosome"/>
</dbReference>
<dbReference type="GO" id="GO:0046872">
    <property type="term" value="F:metal ion binding"/>
    <property type="evidence" value="ECO:0007669"/>
    <property type="project" value="UniProtKB-KW"/>
</dbReference>
<dbReference type="GO" id="GO:0042586">
    <property type="term" value="F:peptide deformylase activity"/>
    <property type="evidence" value="ECO:0007669"/>
    <property type="project" value="UniProtKB-UniRule"/>
</dbReference>
<dbReference type="GO" id="GO:0043686">
    <property type="term" value="P:co-translational protein modification"/>
    <property type="evidence" value="ECO:0007669"/>
    <property type="project" value="TreeGrafter"/>
</dbReference>
<dbReference type="GO" id="GO:0006412">
    <property type="term" value="P:translation"/>
    <property type="evidence" value="ECO:0007669"/>
    <property type="project" value="UniProtKB-UniRule"/>
</dbReference>
<dbReference type="CDD" id="cd00487">
    <property type="entry name" value="Pep_deformylase"/>
    <property type="match status" value="1"/>
</dbReference>
<dbReference type="FunFam" id="3.90.45.10:FF:000005">
    <property type="entry name" value="Peptide deformylase"/>
    <property type="match status" value="1"/>
</dbReference>
<dbReference type="Gene3D" id="3.90.45.10">
    <property type="entry name" value="Peptide deformylase"/>
    <property type="match status" value="1"/>
</dbReference>
<dbReference type="HAMAP" id="MF_00163">
    <property type="entry name" value="Pep_deformylase"/>
    <property type="match status" value="1"/>
</dbReference>
<dbReference type="InterPro" id="IPR023635">
    <property type="entry name" value="Peptide_deformylase"/>
</dbReference>
<dbReference type="InterPro" id="IPR036821">
    <property type="entry name" value="Peptide_deformylase_sf"/>
</dbReference>
<dbReference type="NCBIfam" id="TIGR00079">
    <property type="entry name" value="pept_deformyl"/>
    <property type="match status" value="1"/>
</dbReference>
<dbReference type="NCBIfam" id="NF001159">
    <property type="entry name" value="PRK00150.1-3"/>
    <property type="match status" value="1"/>
</dbReference>
<dbReference type="NCBIfam" id="NF009484">
    <property type="entry name" value="PRK12846.1-5"/>
    <property type="match status" value="1"/>
</dbReference>
<dbReference type="PANTHER" id="PTHR10458">
    <property type="entry name" value="PEPTIDE DEFORMYLASE"/>
    <property type="match status" value="1"/>
</dbReference>
<dbReference type="PANTHER" id="PTHR10458:SF22">
    <property type="entry name" value="PEPTIDE DEFORMYLASE"/>
    <property type="match status" value="1"/>
</dbReference>
<dbReference type="Pfam" id="PF01327">
    <property type="entry name" value="Pep_deformylase"/>
    <property type="match status" value="1"/>
</dbReference>
<dbReference type="PIRSF" id="PIRSF004749">
    <property type="entry name" value="Pep_def"/>
    <property type="match status" value="1"/>
</dbReference>
<dbReference type="PRINTS" id="PR01576">
    <property type="entry name" value="PDEFORMYLASE"/>
</dbReference>
<dbReference type="SUPFAM" id="SSF56420">
    <property type="entry name" value="Peptide deformylase"/>
    <property type="match status" value="1"/>
</dbReference>
<gene>
    <name evidence="1" type="primary">def</name>
    <name type="ordered locus">PHZ_c0373</name>
</gene>